<sequence>MFPLVEFCISNMAKGSDVVFEKLENDPNIDVLEYGCLQNCGLCASSLYALVDGDIVEGNTPDDLLKNIYQHIEDNDITNLL</sequence>
<comment type="similarity">
    <text evidence="1">Belongs to the UPF0349 family.</text>
</comment>
<protein>
    <recommendedName>
        <fullName evidence="1">UPF0349 protein SE_0633</fullName>
    </recommendedName>
</protein>
<reference key="1">
    <citation type="journal article" date="2003" name="Mol. Microbiol.">
        <title>Genome-based analysis of virulence genes in a non-biofilm-forming Staphylococcus epidermidis strain (ATCC 12228).</title>
        <authorList>
            <person name="Zhang Y.-Q."/>
            <person name="Ren S.-X."/>
            <person name="Li H.-L."/>
            <person name="Wang Y.-X."/>
            <person name="Fu G."/>
            <person name="Yang J."/>
            <person name="Qin Z.-Q."/>
            <person name="Miao Y.-G."/>
            <person name="Wang W.-Y."/>
            <person name="Chen R.-S."/>
            <person name="Shen Y."/>
            <person name="Chen Z."/>
            <person name="Yuan Z.-H."/>
            <person name="Zhao G.-P."/>
            <person name="Qu D."/>
            <person name="Danchin A."/>
            <person name="Wen Y.-M."/>
        </authorList>
    </citation>
    <scope>NUCLEOTIDE SEQUENCE [LARGE SCALE GENOMIC DNA]</scope>
    <source>
        <strain>ATCC 12228 / FDA PCI 1200</strain>
    </source>
</reference>
<gene>
    <name type="ordered locus">SE_0633</name>
</gene>
<dbReference type="EMBL" id="AE015929">
    <property type="protein sequence ID" value="AAO04230.1"/>
    <property type="molecule type" value="Genomic_DNA"/>
</dbReference>
<dbReference type="RefSeq" id="NP_764188.1">
    <property type="nucleotide sequence ID" value="NC_004461.1"/>
</dbReference>
<dbReference type="RefSeq" id="WP_001831896.1">
    <property type="nucleotide sequence ID" value="NZ_WBME01000044.1"/>
</dbReference>
<dbReference type="SMR" id="Q8CT91"/>
<dbReference type="KEGG" id="sep:SE_0633"/>
<dbReference type="PATRIC" id="fig|176280.10.peg.606"/>
<dbReference type="eggNOG" id="COG4844">
    <property type="taxonomic scope" value="Bacteria"/>
</dbReference>
<dbReference type="HOGENOM" id="CLU_182025_0_0_9"/>
<dbReference type="OrthoDB" id="1684419at2"/>
<dbReference type="Proteomes" id="UP000001411">
    <property type="component" value="Chromosome"/>
</dbReference>
<dbReference type="HAMAP" id="MF_01542">
    <property type="entry name" value="UPF0349"/>
    <property type="match status" value="1"/>
</dbReference>
<dbReference type="InterPro" id="IPR009910">
    <property type="entry name" value="DUF1450"/>
</dbReference>
<dbReference type="InterPro" id="IPR022916">
    <property type="entry name" value="UPF0349"/>
</dbReference>
<dbReference type="NCBIfam" id="NF010190">
    <property type="entry name" value="PRK13669.1"/>
    <property type="match status" value="1"/>
</dbReference>
<dbReference type="Pfam" id="PF07293">
    <property type="entry name" value="DUF1450"/>
    <property type="match status" value="1"/>
</dbReference>
<name>Y633_STAES</name>
<accession>Q8CT91</accession>
<evidence type="ECO:0000255" key="1">
    <source>
        <dbReference type="HAMAP-Rule" id="MF_01542"/>
    </source>
</evidence>
<proteinExistence type="inferred from homology"/>
<organism>
    <name type="scientific">Staphylococcus epidermidis (strain ATCC 12228 / FDA PCI 1200)</name>
    <dbReference type="NCBI Taxonomy" id="176280"/>
    <lineage>
        <taxon>Bacteria</taxon>
        <taxon>Bacillati</taxon>
        <taxon>Bacillota</taxon>
        <taxon>Bacilli</taxon>
        <taxon>Bacillales</taxon>
        <taxon>Staphylococcaceae</taxon>
        <taxon>Staphylococcus</taxon>
    </lineage>
</organism>
<feature type="chain" id="PRO_0000165900" description="UPF0349 protein SE_0633">
    <location>
        <begin position="1"/>
        <end position="81"/>
    </location>
</feature>